<name>COAX_FINM2</name>
<gene>
    <name evidence="1" type="primary">coaX</name>
    <name type="ordered locus">FMG_0990</name>
</gene>
<proteinExistence type="inferred from homology"/>
<reference key="1">
    <citation type="journal article" date="2008" name="DNA Res.">
        <title>Complete genome sequence of Finegoldia magna, an anaerobic opportunistic pathogen.</title>
        <authorList>
            <person name="Goto T."/>
            <person name="Yamashita A."/>
            <person name="Hirakawa H."/>
            <person name="Matsutani M."/>
            <person name="Todo K."/>
            <person name="Ohshima K."/>
            <person name="Toh H."/>
            <person name="Miyamoto K."/>
            <person name="Kuhara S."/>
            <person name="Hattori M."/>
            <person name="Shimizu T."/>
            <person name="Akimoto S."/>
        </authorList>
    </citation>
    <scope>NUCLEOTIDE SEQUENCE [LARGE SCALE GENOMIC DNA]</scope>
    <source>
        <strain>ATCC 29328 / DSM 20472 / WAL 2508</strain>
    </source>
</reference>
<protein>
    <recommendedName>
        <fullName evidence="1">Type III pantothenate kinase</fullName>
        <ecNumber evidence="1">2.7.1.33</ecNumber>
    </recommendedName>
    <alternativeName>
        <fullName evidence="1">PanK-III</fullName>
    </alternativeName>
    <alternativeName>
        <fullName evidence="1">Pantothenic acid kinase</fullName>
    </alternativeName>
</protein>
<evidence type="ECO:0000255" key="1">
    <source>
        <dbReference type="HAMAP-Rule" id="MF_01274"/>
    </source>
</evidence>
<comment type="function">
    <text evidence="1">Catalyzes the phosphorylation of pantothenate (Pan), the first step in CoA biosynthesis.</text>
</comment>
<comment type="catalytic activity">
    <reaction evidence="1">
        <text>(R)-pantothenate + ATP = (R)-4'-phosphopantothenate + ADP + H(+)</text>
        <dbReference type="Rhea" id="RHEA:16373"/>
        <dbReference type="ChEBI" id="CHEBI:10986"/>
        <dbReference type="ChEBI" id="CHEBI:15378"/>
        <dbReference type="ChEBI" id="CHEBI:29032"/>
        <dbReference type="ChEBI" id="CHEBI:30616"/>
        <dbReference type="ChEBI" id="CHEBI:456216"/>
        <dbReference type="EC" id="2.7.1.33"/>
    </reaction>
</comment>
<comment type="cofactor">
    <cofactor evidence="1">
        <name>NH4(+)</name>
        <dbReference type="ChEBI" id="CHEBI:28938"/>
    </cofactor>
    <cofactor evidence="1">
        <name>K(+)</name>
        <dbReference type="ChEBI" id="CHEBI:29103"/>
    </cofactor>
    <text evidence="1">A monovalent cation. Ammonium or potassium.</text>
</comment>
<comment type="pathway">
    <text evidence="1">Cofactor biosynthesis; coenzyme A biosynthesis; CoA from (R)-pantothenate: step 1/5.</text>
</comment>
<comment type="subunit">
    <text evidence="1">Homodimer.</text>
</comment>
<comment type="subcellular location">
    <subcellularLocation>
        <location evidence="1">Cytoplasm</location>
    </subcellularLocation>
</comment>
<comment type="similarity">
    <text evidence="1">Belongs to the type III pantothenate kinase family.</text>
</comment>
<organism>
    <name type="scientific">Finegoldia magna (strain ATCC 29328 / DSM 20472 / WAL 2508)</name>
    <name type="common">Peptostreptococcus magnus</name>
    <dbReference type="NCBI Taxonomy" id="334413"/>
    <lineage>
        <taxon>Bacteria</taxon>
        <taxon>Bacillati</taxon>
        <taxon>Bacillota</taxon>
        <taxon>Tissierellia</taxon>
        <taxon>Tissierellales</taxon>
        <taxon>Peptoniphilaceae</taxon>
        <taxon>Finegoldia</taxon>
    </lineage>
</organism>
<feature type="chain" id="PRO_1000214188" description="Type III pantothenate kinase">
    <location>
        <begin position="1"/>
        <end position="262"/>
    </location>
</feature>
<feature type="active site" description="Proton acceptor" evidence="1">
    <location>
        <position position="112"/>
    </location>
</feature>
<feature type="binding site" evidence="1">
    <location>
        <begin position="9"/>
        <end position="16"/>
    </location>
    <ligand>
        <name>ATP</name>
        <dbReference type="ChEBI" id="CHEBI:30616"/>
    </ligand>
</feature>
<feature type="binding site" evidence="1">
    <location>
        <position position="103"/>
    </location>
    <ligand>
        <name>substrate</name>
    </ligand>
</feature>
<feature type="binding site" evidence="1">
    <location>
        <begin position="110"/>
        <end position="113"/>
    </location>
    <ligand>
        <name>substrate</name>
    </ligand>
</feature>
<feature type="binding site" evidence="1">
    <location>
        <position position="132"/>
    </location>
    <ligand>
        <name>K(+)</name>
        <dbReference type="ChEBI" id="CHEBI:29103"/>
    </ligand>
</feature>
<feature type="binding site" evidence="1">
    <location>
        <position position="135"/>
    </location>
    <ligand>
        <name>ATP</name>
        <dbReference type="ChEBI" id="CHEBI:30616"/>
    </ligand>
</feature>
<feature type="binding site" evidence="1">
    <location>
        <position position="187"/>
    </location>
    <ligand>
        <name>substrate</name>
    </ligand>
</feature>
<sequence length="262" mass="28893">MEDILLVIDIGNTNIVLGIFKDDELIFEWRISTDLHKTSDEYALTLRQALEYSNVKKSDVKEAIIGSVVPNLMPTIPKAVKKYLGIEPLIVDEKIKTGIVNKYASPKEVGVDRIINAVSACKKYSTPVIIVDIGTAITFDYITENKEYLGGAIAPGIAISSEALFMKTAKLPKIEIEMPDSVIGDSTVKSMQSGVVFGFIGLIDYIIEKILEEKDKTKDEVTIIATGGFSYLIAKQSKYITIIDKLITLDGLKIINDLNKND</sequence>
<dbReference type="EC" id="2.7.1.33" evidence="1"/>
<dbReference type="EMBL" id="AP008971">
    <property type="protein sequence ID" value="BAG08408.1"/>
    <property type="molecule type" value="Genomic_DNA"/>
</dbReference>
<dbReference type="RefSeq" id="WP_012290760.1">
    <property type="nucleotide sequence ID" value="NC_010376.1"/>
</dbReference>
<dbReference type="SMR" id="B0S218"/>
<dbReference type="STRING" id="334413.FMG_0990"/>
<dbReference type="KEGG" id="fma:FMG_0990"/>
<dbReference type="eggNOG" id="COG1521">
    <property type="taxonomic scope" value="Bacteria"/>
</dbReference>
<dbReference type="HOGENOM" id="CLU_066627_1_0_9"/>
<dbReference type="UniPathway" id="UPA00241">
    <property type="reaction ID" value="UER00352"/>
</dbReference>
<dbReference type="Proteomes" id="UP000001319">
    <property type="component" value="Chromosome"/>
</dbReference>
<dbReference type="GO" id="GO:0005737">
    <property type="term" value="C:cytoplasm"/>
    <property type="evidence" value="ECO:0007669"/>
    <property type="project" value="UniProtKB-SubCell"/>
</dbReference>
<dbReference type="GO" id="GO:0005524">
    <property type="term" value="F:ATP binding"/>
    <property type="evidence" value="ECO:0007669"/>
    <property type="project" value="UniProtKB-UniRule"/>
</dbReference>
<dbReference type="GO" id="GO:0046872">
    <property type="term" value="F:metal ion binding"/>
    <property type="evidence" value="ECO:0007669"/>
    <property type="project" value="UniProtKB-KW"/>
</dbReference>
<dbReference type="GO" id="GO:0004594">
    <property type="term" value="F:pantothenate kinase activity"/>
    <property type="evidence" value="ECO:0007669"/>
    <property type="project" value="UniProtKB-UniRule"/>
</dbReference>
<dbReference type="GO" id="GO:0015937">
    <property type="term" value="P:coenzyme A biosynthetic process"/>
    <property type="evidence" value="ECO:0007669"/>
    <property type="project" value="UniProtKB-UniRule"/>
</dbReference>
<dbReference type="CDD" id="cd24015">
    <property type="entry name" value="ASKHA_NBD_PanK-III"/>
    <property type="match status" value="1"/>
</dbReference>
<dbReference type="Gene3D" id="3.30.420.40">
    <property type="match status" value="2"/>
</dbReference>
<dbReference type="HAMAP" id="MF_01274">
    <property type="entry name" value="Pantothen_kinase_3"/>
    <property type="match status" value="1"/>
</dbReference>
<dbReference type="InterPro" id="IPR043129">
    <property type="entry name" value="ATPase_NBD"/>
</dbReference>
<dbReference type="InterPro" id="IPR004619">
    <property type="entry name" value="Type_III_PanK"/>
</dbReference>
<dbReference type="NCBIfam" id="TIGR00671">
    <property type="entry name" value="baf"/>
    <property type="match status" value="1"/>
</dbReference>
<dbReference type="NCBIfam" id="NF009848">
    <property type="entry name" value="PRK13318.1-6"/>
    <property type="match status" value="1"/>
</dbReference>
<dbReference type="NCBIfam" id="NF009855">
    <property type="entry name" value="PRK13321.1"/>
    <property type="match status" value="1"/>
</dbReference>
<dbReference type="PANTHER" id="PTHR34265">
    <property type="entry name" value="TYPE III PANTOTHENATE KINASE"/>
    <property type="match status" value="1"/>
</dbReference>
<dbReference type="PANTHER" id="PTHR34265:SF1">
    <property type="entry name" value="TYPE III PANTOTHENATE KINASE"/>
    <property type="match status" value="1"/>
</dbReference>
<dbReference type="Pfam" id="PF03309">
    <property type="entry name" value="Pan_kinase"/>
    <property type="match status" value="1"/>
</dbReference>
<dbReference type="SUPFAM" id="SSF53067">
    <property type="entry name" value="Actin-like ATPase domain"/>
    <property type="match status" value="2"/>
</dbReference>
<accession>B0S218</accession>
<keyword id="KW-0067">ATP-binding</keyword>
<keyword id="KW-0173">Coenzyme A biosynthesis</keyword>
<keyword id="KW-0963">Cytoplasm</keyword>
<keyword id="KW-0418">Kinase</keyword>
<keyword id="KW-0479">Metal-binding</keyword>
<keyword id="KW-0547">Nucleotide-binding</keyword>
<keyword id="KW-0630">Potassium</keyword>
<keyword id="KW-1185">Reference proteome</keyword>
<keyword id="KW-0808">Transferase</keyword>